<reference key="1">
    <citation type="journal article" date="2009" name="PLoS Comput. Biol.">
        <title>Evolutionary sequence modeling for discovery of peptide hormones.</title>
        <authorList>
            <person name="Sonmez K."/>
            <person name="Zaveri N.T."/>
            <person name="Kerman I.A."/>
            <person name="Burke S."/>
            <person name="Neal C.R."/>
            <person name="Xie X."/>
            <person name="Watson S.J."/>
            <person name="Toll L."/>
        </authorList>
    </citation>
    <scope>NUCLEOTIDE SEQUENCE [MRNA]</scope>
    <scope>TISSUE SPECIFICITY</scope>
</reference>
<reference key="2">
    <citation type="journal article" date="2004" name="Nat. Genet.">
        <title>Complete sequencing and characterization of 21,243 full-length human cDNAs.</title>
        <authorList>
            <person name="Ota T."/>
            <person name="Suzuki Y."/>
            <person name="Nishikawa T."/>
            <person name="Otsuki T."/>
            <person name="Sugiyama T."/>
            <person name="Irie R."/>
            <person name="Wakamatsu A."/>
            <person name="Hayashi K."/>
            <person name="Sato H."/>
            <person name="Nagai K."/>
            <person name="Kimura K."/>
            <person name="Makita H."/>
            <person name="Sekine M."/>
            <person name="Obayashi M."/>
            <person name="Nishi T."/>
            <person name="Shibahara T."/>
            <person name="Tanaka T."/>
            <person name="Ishii S."/>
            <person name="Yamamoto J."/>
            <person name="Saito K."/>
            <person name="Kawai Y."/>
            <person name="Isono Y."/>
            <person name="Nakamura Y."/>
            <person name="Nagahari K."/>
            <person name="Murakami K."/>
            <person name="Yasuda T."/>
            <person name="Iwayanagi T."/>
            <person name="Wagatsuma M."/>
            <person name="Shiratori A."/>
            <person name="Sudo H."/>
            <person name="Hosoiri T."/>
            <person name="Kaku Y."/>
            <person name="Kodaira H."/>
            <person name="Kondo H."/>
            <person name="Sugawara M."/>
            <person name="Takahashi M."/>
            <person name="Kanda K."/>
            <person name="Yokoi T."/>
            <person name="Furuya T."/>
            <person name="Kikkawa E."/>
            <person name="Omura Y."/>
            <person name="Abe K."/>
            <person name="Kamihara K."/>
            <person name="Katsuta N."/>
            <person name="Sato K."/>
            <person name="Tanikawa M."/>
            <person name="Yamazaki M."/>
            <person name="Ninomiya K."/>
            <person name="Ishibashi T."/>
            <person name="Yamashita H."/>
            <person name="Murakawa K."/>
            <person name="Fujimori K."/>
            <person name="Tanai H."/>
            <person name="Kimata M."/>
            <person name="Watanabe M."/>
            <person name="Hiraoka S."/>
            <person name="Chiba Y."/>
            <person name="Ishida S."/>
            <person name="Ono Y."/>
            <person name="Takiguchi S."/>
            <person name="Watanabe S."/>
            <person name="Yosida M."/>
            <person name="Hotuta T."/>
            <person name="Kusano J."/>
            <person name="Kanehori K."/>
            <person name="Takahashi-Fujii A."/>
            <person name="Hara H."/>
            <person name="Tanase T.-O."/>
            <person name="Nomura Y."/>
            <person name="Togiya S."/>
            <person name="Komai F."/>
            <person name="Hara R."/>
            <person name="Takeuchi K."/>
            <person name="Arita M."/>
            <person name="Imose N."/>
            <person name="Musashino K."/>
            <person name="Yuuki H."/>
            <person name="Oshima A."/>
            <person name="Sasaki N."/>
            <person name="Aotsuka S."/>
            <person name="Yoshikawa Y."/>
            <person name="Matsunawa H."/>
            <person name="Ichihara T."/>
            <person name="Shiohata N."/>
            <person name="Sano S."/>
            <person name="Moriya S."/>
            <person name="Momiyama H."/>
            <person name="Satoh N."/>
            <person name="Takami S."/>
            <person name="Terashima Y."/>
            <person name="Suzuki O."/>
            <person name="Nakagawa S."/>
            <person name="Senoh A."/>
            <person name="Mizoguchi H."/>
            <person name="Goto Y."/>
            <person name="Shimizu F."/>
            <person name="Wakebe H."/>
            <person name="Hishigaki H."/>
            <person name="Watanabe T."/>
            <person name="Sugiyama A."/>
            <person name="Takemoto M."/>
            <person name="Kawakami B."/>
            <person name="Yamazaki M."/>
            <person name="Watanabe K."/>
            <person name="Kumagai A."/>
            <person name="Itakura S."/>
            <person name="Fukuzumi Y."/>
            <person name="Fujimori Y."/>
            <person name="Komiyama M."/>
            <person name="Tashiro H."/>
            <person name="Tanigami A."/>
            <person name="Fujiwara T."/>
            <person name="Ono T."/>
            <person name="Yamada K."/>
            <person name="Fujii Y."/>
            <person name="Ozaki K."/>
            <person name="Hirao M."/>
            <person name="Ohmori Y."/>
            <person name="Kawabata A."/>
            <person name="Hikiji T."/>
            <person name="Kobatake N."/>
            <person name="Inagaki H."/>
            <person name="Ikema Y."/>
            <person name="Okamoto S."/>
            <person name="Okitani R."/>
            <person name="Kawakami T."/>
            <person name="Noguchi S."/>
            <person name="Itoh T."/>
            <person name="Shigeta K."/>
            <person name="Senba T."/>
            <person name="Matsumura K."/>
            <person name="Nakajima Y."/>
            <person name="Mizuno T."/>
            <person name="Morinaga M."/>
            <person name="Sasaki M."/>
            <person name="Togashi T."/>
            <person name="Oyama M."/>
            <person name="Hata H."/>
            <person name="Watanabe M."/>
            <person name="Komatsu T."/>
            <person name="Mizushima-Sugano J."/>
            <person name="Satoh T."/>
            <person name="Shirai Y."/>
            <person name="Takahashi Y."/>
            <person name="Nakagawa K."/>
            <person name="Okumura K."/>
            <person name="Nagase T."/>
            <person name="Nomura N."/>
            <person name="Kikuchi H."/>
            <person name="Masuho Y."/>
            <person name="Yamashita R."/>
            <person name="Nakai K."/>
            <person name="Yada T."/>
            <person name="Nakamura Y."/>
            <person name="Ohara O."/>
            <person name="Isogai T."/>
            <person name="Sugano S."/>
        </authorList>
    </citation>
    <scope>NUCLEOTIDE SEQUENCE [LARGE SCALE MRNA]</scope>
    <source>
        <tissue>Embryo</tissue>
    </source>
</reference>
<reference key="3">
    <citation type="submission" date="2005-07" db="EMBL/GenBank/DDBJ databases">
        <authorList>
            <person name="Mural R.J."/>
            <person name="Istrail S."/>
            <person name="Sutton G.G."/>
            <person name="Florea L."/>
            <person name="Halpern A.L."/>
            <person name="Mobarry C.M."/>
            <person name="Lippert R."/>
            <person name="Walenz B."/>
            <person name="Shatkay H."/>
            <person name="Dew I."/>
            <person name="Miller J.R."/>
            <person name="Flanigan M.J."/>
            <person name="Edwards N.J."/>
            <person name="Bolanos R."/>
            <person name="Fasulo D."/>
            <person name="Halldorsson B.V."/>
            <person name="Hannenhalli S."/>
            <person name="Turner R."/>
            <person name="Yooseph S."/>
            <person name="Lu F."/>
            <person name="Nusskern D.R."/>
            <person name="Shue B.C."/>
            <person name="Zheng X.H."/>
            <person name="Zhong F."/>
            <person name="Delcher A.L."/>
            <person name="Huson D.H."/>
            <person name="Kravitz S.A."/>
            <person name="Mouchard L."/>
            <person name="Reinert K."/>
            <person name="Remington K.A."/>
            <person name="Clark A.G."/>
            <person name="Waterman M.S."/>
            <person name="Eichler E.E."/>
            <person name="Adams M.D."/>
            <person name="Hunkapiller M.W."/>
            <person name="Myers E.W."/>
            <person name="Venter J.C."/>
        </authorList>
    </citation>
    <scope>NUCLEOTIDE SEQUENCE [LARGE SCALE GENOMIC DNA]</scope>
</reference>
<reference key="4">
    <citation type="journal article" date="2004" name="Genome Res.">
        <title>The status, quality, and expansion of the NIH full-length cDNA project: the Mammalian Gene Collection (MGC).</title>
        <authorList>
            <consortium name="The MGC Project Team"/>
        </authorList>
    </citation>
    <scope>NUCLEOTIDE SEQUENCE [LARGE SCALE MRNA]</scope>
    <source>
        <tissue>Uterus</tissue>
    </source>
</reference>
<reference key="5">
    <citation type="journal article" date="2007" name="Genome Res.">
        <title>Identification of novel peptide hormones in the human proteome by hidden Markov model screening.</title>
        <authorList>
            <person name="Mirabeau O."/>
            <person name="Perlas E."/>
            <person name="Severini C."/>
            <person name="Audero E."/>
            <person name="Gascuel O."/>
            <person name="Possenti R."/>
            <person name="Birney E."/>
            <person name="Rosenthal N."/>
            <person name="Gross C."/>
        </authorList>
    </citation>
    <scope>FUNCTION (SPEXIN-1)</scope>
    <scope>SUBCELLULAR LOCATION</scope>
    <scope>TISSUE SPECIFICITY</scope>
</reference>
<reference key="6">
    <citation type="journal article" date="2010" name="Biosci. Rep.">
        <title>C12ORF39, a novel secreted prot ein with a typical amidation processing signal.</title>
        <authorList>
            <person name="Wan B."/>
            <person name="Wang X.R."/>
            <person name="Zhou Y.B."/>
            <person name="Zhang X."/>
            <person name="Huo K."/>
            <person name="Han Z.G."/>
        </authorList>
    </citation>
    <scope>SUBCELLULAR LOCATION</scope>
    <scope>TISSUE SPECIFICITY</scope>
</reference>
<reference key="7">
    <citation type="journal article" date="2012" name="Adv. Exp. Med. Biol.">
        <title>Spexin is expressed in the carotid body and is upregulated by postnatal hyperoxia exposure.</title>
        <authorList>
            <person name="Porzionato A."/>
            <person name="Rucinski M."/>
            <person name="Macchi V."/>
            <person name="Stecco C."/>
            <person name="Sarasin G."/>
            <person name="Sfriso M.M."/>
            <person name="Di Giulio C."/>
            <person name="Malendowicz L.K."/>
            <person name="De Caro R."/>
        </authorList>
    </citation>
    <scope>TISSUE SPECIFICITY</scope>
</reference>
<reference key="8">
    <citation type="journal article" date="2012" name="FASEB J.">
        <title>Peptides derived from the prohormone proNPQ/spexin are potent central modulators of cardiovascular and renal function and nociception.</title>
        <authorList>
            <person name="Toll L."/>
            <person name="Khroyan T.V."/>
            <person name="Sonmez K."/>
            <person name="Ozawa A."/>
            <person name="Lindberg I."/>
            <person name="McLaughlin J.P."/>
            <person name="Eans S.O."/>
            <person name="Shahien A.A."/>
            <person name="Kapusta D.R."/>
        </authorList>
    </citation>
    <scope>PROTEOLYTIC PROCESSING (SPEXIN-1 AND SPEXIN-2)</scope>
    <scope>AMIDATION AT GLN-49</scope>
</reference>
<reference key="9">
    <citation type="journal article" date="2014" name="Endocrinology">
        <title>Coevolution of the spexin/galanin/kisspeptin family: Spexin activates galanin receptor type II and III.</title>
        <authorList>
            <person name="Kim D.K."/>
            <person name="Yun S."/>
            <person name="Son G.H."/>
            <person name="Hwang J.I."/>
            <person name="Park C.R."/>
            <person name="Kim J.I."/>
            <person name="Kim K."/>
            <person name="Vaudry H."/>
            <person name="Seong J.Y."/>
        </authorList>
    </citation>
    <scope>FUNCTION (SPEXIN-1)</scope>
    <scope>PHYLOGENY</scope>
</reference>
<reference key="10">
    <citation type="journal article" date="2014" name="Obesity">
        <title>Spexin is a novel human peptide that reduces adipocyte uptake of long chain fatty acids and causes weight loss in rodents with diet-induced obesity.</title>
        <authorList>
            <person name="Walewski J.L."/>
            <person name="Ge F."/>
            <person name="Lobdell H. IV"/>
            <person name="Levin N."/>
            <person name="Schwartz G.J."/>
            <person name="Vasselli J.R."/>
            <person name="Pomp A."/>
            <person name="Dakin G."/>
            <person name="Berk P.D."/>
        </authorList>
    </citation>
    <scope>SUBCELLULAR LOCATION</scope>
    <scope>INDUCTION</scope>
</reference>
<gene>
    <name type="primary">SPX</name>
    <name type="synonym">C12orf39</name>
</gene>
<name>SPXN_HUMAN</name>
<evidence type="ECO:0000250" key="1"/>
<evidence type="ECO:0000255" key="2"/>
<evidence type="ECO:0000256" key="3">
    <source>
        <dbReference type="SAM" id="MobiDB-lite"/>
    </source>
</evidence>
<evidence type="ECO:0000269" key="4">
    <source>
    </source>
</evidence>
<evidence type="ECO:0000269" key="5">
    <source>
    </source>
</evidence>
<evidence type="ECO:0000269" key="6">
    <source>
    </source>
</evidence>
<evidence type="ECO:0000269" key="7">
    <source>
    </source>
</evidence>
<evidence type="ECO:0000269" key="8">
    <source>
    </source>
</evidence>
<evidence type="ECO:0000269" key="9">
    <source>
    </source>
</evidence>
<evidence type="ECO:0000269" key="10">
    <source>
    </source>
</evidence>
<evidence type="ECO:0000305" key="11"/>
<evidence type="ECO:0007829" key="12">
    <source>
        <dbReference type="PDB" id="7XJL"/>
    </source>
</evidence>
<comment type="function">
    <text evidence="1">Plays a role as a central modulator of cardiovascular and renal function and nociception. Also plays a role in energy metabolism and storage. Inhibits adrenocortical cell proliferation with minor stimulation on corticosteroid release (By similarity).</text>
</comment>
<comment type="function">
    <molecule>Spexin-1</molecule>
    <text evidence="1 4 9">Acts as a ligand for galanin receptors GALR2 and GALR3 (PubMed:17284679, PubMed:24517231). Intracerebroventricular administration of the peptide induces an increase in arterial blood pressure, a decrease in both heart rate and renal excretion and delayed natriuresis. Intraventricular administration of the peptide induces antinociceptive activity. Also induces contraction of muscarinic-like stomach smooth muscles. Intraperitoneal administration of the peptide induces a reduction in food consumption and body weight. Inhibits long chain fatty acid uptake into adipocytes (By similarity).</text>
</comment>
<comment type="function">
    <molecule>Spexin-2</molecule>
    <text evidence="1">Intracerebroventricular administration of the peptide induces a decrease in heart rate, but no change in arterial pressure, and an increase in urine flow rate. Intraventricular administration of the peptide induces antinociceptive activity (By similarity).</text>
</comment>
<comment type="interaction">
    <interactant intactId="EBI-17975052">
        <id>Q9BT56</id>
    </interactant>
    <interactant intactId="EBI-5454865">
        <id>Q6IN84</id>
        <label>MRM1</label>
    </interactant>
    <organismsDiffer>false</organismsDiffer>
    <experiments>3</experiments>
</comment>
<comment type="subcellular location">
    <subcellularLocation>
        <location>Secreted</location>
    </subcellularLocation>
    <subcellularLocation>
        <location>Secreted</location>
        <location>Extracellular space</location>
    </subcellularLocation>
    <subcellularLocation>
        <location>Cytoplasmic vesicle</location>
        <location>Secretory vesicle</location>
    </subcellularLocation>
    <text>Secreted via the classical ER/Golgi-dependent pathway into the extracellular medium largely as a full-length protein without the signal peptide, and not as a hydrolyzed and amidated peptide (PubMed:17284679, PubMed:19193193). Localized extracellularly surrounding the villous trophoblastic cells. Detected in the serum.</text>
</comment>
<comment type="tissue specificity">
    <text evidence="4 5 6 8">Expressed in the type I glomic cells within the carotid body (at protein level). Expressed predominantly in pancreas, testis, kidney, brain and placenta. Expressed in submucosal layer of esophagus and stomach fundus.</text>
</comment>
<comment type="induction">
    <text evidence="10">Down-regulated in omental and subcutaneous fat of obese subjects.</text>
</comment>
<comment type="similarity">
    <text evidence="11">Belongs to the spexin family.</text>
</comment>
<accession>Q9BT56</accession>
<accession>B3KND6</accession>
<organism>
    <name type="scientific">Homo sapiens</name>
    <name type="common">Human</name>
    <dbReference type="NCBI Taxonomy" id="9606"/>
    <lineage>
        <taxon>Eukaryota</taxon>
        <taxon>Metazoa</taxon>
        <taxon>Chordata</taxon>
        <taxon>Craniata</taxon>
        <taxon>Vertebrata</taxon>
        <taxon>Euteleostomi</taxon>
        <taxon>Mammalia</taxon>
        <taxon>Eutheria</taxon>
        <taxon>Euarchontoglires</taxon>
        <taxon>Primates</taxon>
        <taxon>Haplorrhini</taxon>
        <taxon>Catarrhini</taxon>
        <taxon>Hominidae</taxon>
        <taxon>Homo</taxon>
    </lineage>
</organism>
<sequence>MKGLRSLAATTLALFLVFVFLGNSSCAPQRLLERRNWTPQAMLYLKGAQGRRFISDQSRRKDLSDRPLPERRSPNPQLLTIPEAATILLASLQKSPEDEEKNFDQTRFLEDSLLNW</sequence>
<protein>
    <recommendedName>
        <fullName>Spexin</fullName>
    </recommendedName>
    <alternativeName>
        <fullName>NPQ</fullName>
    </alternativeName>
    <alternativeName>
        <fullName>Neuropeptide Q</fullName>
    </alternativeName>
    <alternativeName>
        <fullName>Spexin hormone</fullName>
    </alternativeName>
    <component>
        <recommendedName>
            <fullName>Spexin-1</fullName>
        </recommendedName>
    </component>
    <component>
        <recommendedName>
            <fullName>Spexin-2</fullName>
        </recommendedName>
        <alternativeName>
            <fullName>NPQ 53-70</fullName>
        </alternativeName>
    </component>
</protein>
<keyword id="KW-0002">3D-structure</keyword>
<keyword id="KW-0027">Amidation</keyword>
<keyword id="KW-0165">Cleavage on pair of basic residues</keyword>
<keyword id="KW-0968">Cytoplasmic vesicle</keyword>
<keyword id="KW-0372">Hormone</keyword>
<keyword id="KW-1267">Proteomics identification</keyword>
<keyword id="KW-1185">Reference proteome</keyword>
<keyword id="KW-0964">Secreted</keyword>
<keyword id="KW-0732">Signal</keyword>
<dbReference type="EMBL" id="AK027273">
    <property type="protein sequence ID" value="BAG51298.1"/>
    <property type="molecule type" value="mRNA"/>
</dbReference>
<dbReference type="EMBL" id="AK075342">
    <property type="protein sequence ID" value="BAG52117.1"/>
    <property type="molecule type" value="mRNA"/>
</dbReference>
<dbReference type="EMBL" id="CH471094">
    <property type="protein sequence ID" value="EAW96444.1"/>
    <property type="molecule type" value="Genomic_DNA"/>
</dbReference>
<dbReference type="EMBL" id="BC004336">
    <property type="protein sequence ID" value="AAH04336.1"/>
    <property type="molecule type" value="mRNA"/>
</dbReference>
<dbReference type="CCDS" id="CCDS31757.1"/>
<dbReference type="RefSeq" id="NP_085049.1">
    <property type="nucleotide sequence ID" value="NM_030572.4"/>
</dbReference>
<dbReference type="PDB" id="7XJL">
    <property type="method" value="EM"/>
    <property type="resolution" value="3.50 A"/>
    <property type="chains" value="A=36-49"/>
</dbReference>
<dbReference type="PDBsum" id="7XJL"/>
<dbReference type="EMDB" id="EMD-33231"/>
<dbReference type="SMR" id="Q9BT56"/>
<dbReference type="BioGRID" id="123297">
    <property type="interactions" value="34"/>
</dbReference>
<dbReference type="FunCoup" id="Q9BT56">
    <property type="interactions" value="438"/>
</dbReference>
<dbReference type="IntAct" id="Q9BT56">
    <property type="interactions" value="31"/>
</dbReference>
<dbReference type="STRING" id="9606.ENSP00000256969"/>
<dbReference type="BioMuta" id="SPX"/>
<dbReference type="jPOST" id="Q9BT56"/>
<dbReference type="MassIVE" id="Q9BT56"/>
<dbReference type="PaxDb" id="9606-ENSP00000256969"/>
<dbReference type="PeptideAtlas" id="Q9BT56"/>
<dbReference type="ProteomicsDB" id="78952"/>
<dbReference type="Antibodypedia" id="2438">
    <property type="antibodies" value="24 antibodies from 10 providers"/>
</dbReference>
<dbReference type="DNASU" id="80763"/>
<dbReference type="Ensembl" id="ENST00000256969.7">
    <property type="protein sequence ID" value="ENSP00000256969.2"/>
    <property type="gene ID" value="ENSG00000134548.11"/>
</dbReference>
<dbReference type="GeneID" id="80763"/>
<dbReference type="KEGG" id="hsa:80763"/>
<dbReference type="MANE-Select" id="ENST00000256969.7">
    <property type="protein sequence ID" value="ENSP00000256969.2"/>
    <property type="RefSeq nucleotide sequence ID" value="NM_030572.4"/>
    <property type="RefSeq protein sequence ID" value="NP_085049.1"/>
</dbReference>
<dbReference type="UCSC" id="uc001rfa.2">
    <property type="organism name" value="human"/>
</dbReference>
<dbReference type="AGR" id="HGNC:28139"/>
<dbReference type="CTD" id="80763"/>
<dbReference type="DisGeNET" id="80763"/>
<dbReference type="GeneCards" id="SPX"/>
<dbReference type="HGNC" id="HGNC:28139">
    <property type="gene designation" value="SPX"/>
</dbReference>
<dbReference type="HPA" id="ENSG00000134548">
    <property type="expression patterns" value="Tissue enriched (adipose)"/>
</dbReference>
<dbReference type="MIM" id="619246">
    <property type="type" value="gene"/>
</dbReference>
<dbReference type="neXtProt" id="NX_Q9BT56"/>
<dbReference type="OpenTargets" id="ENSG00000134548"/>
<dbReference type="PharmGKB" id="PA143485369"/>
<dbReference type="VEuPathDB" id="HostDB:ENSG00000134548"/>
<dbReference type="eggNOG" id="ENOG502SAD1">
    <property type="taxonomic scope" value="Eukaryota"/>
</dbReference>
<dbReference type="GeneTree" id="ENSGT00390000012501"/>
<dbReference type="HOGENOM" id="CLU_169090_0_0_1"/>
<dbReference type="InParanoid" id="Q9BT56"/>
<dbReference type="OMA" id="DEVYIQE"/>
<dbReference type="OrthoDB" id="9946068at2759"/>
<dbReference type="PAN-GO" id="Q9BT56">
    <property type="GO annotations" value="4 GO annotations based on evolutionary models"/>
</dbReference>
<dbReference type="PhylomeDB" id="Q9BT56"/>
<dbReference type="TreeFam" id="TF333402"/>
<dbReference type="PathwayCommons" id="Q9BT56"/>
<dbReference type="SignaLink" id="Q9BT56"/>
<dbReference type="SIGNOR" id="Q9BT56"/>
<dbReference type="BioGRID-ORCS" id="80763">
    <property type="hits" value="13 hits in 1143 CRISPR screens"/>
</dbReference>
<dbReference type="GenomeRNAi" id="80763"/>
<dbReference type="Pharos" id="Q9BT56">
    <property type="development level" value="Tbio"/>
</dbReference>
<dbReference type="PRO" id="PR:Q9BT56"/>
<dbReference type="Proteomes" id="UP000005640">
    <property type="component" value="Chromosome 12"/>
</dbReference>
<dbReference type="RNAct" id="Q9BT56">
    <property type="molecule type" value="protein"/>
</dbReference>
<dbReference type="Bgee" id="ENSG00000134548">
    <property type="expression patterns" value="Expressed in body of pancreas and 138 other cell types or tissues"/>
</dbReference>
<dbReference type="ExpressionAtlas" id="Q9BT56">
    <property type="expression patterns" value="baseline and differential"/>
</dbReference>
<dbReference type="GO" id="GO:0005737">
    <property type="term" value="C:cytoplasm"/>
    <property type="evidence" value="ECO:0000318"/>
    <property type="project" value="GO_Central"/>
</dbReference>
<dbReference type="GO" id="GO:0031045">
    <property type="term" value="C:dense core granule"/>
    <property type="evidence" value="ECO:0000314"/>
    <property type="project" value="UniProtKB"/>
</dbReference>
<dbReference type="GO" id="GO:0005615">
    <property type="term" value="C:extracellular space"/>
    <property type="evidence" value="ECO:0000314"/>
    <property type="project" value="UniProtKB"/>
</dbReference>
<dbReference type="GO" id="GO:0030133">
    <property type="term" value="C:transport vesicle"/>
    <property type="evidence" value="ECO:0007669"/>
    <property type="project" value="UniProtKB-SubCell"/>
</dbReference>
<dbReference type="GO" id="GO:0005184">
    <property type="term" value="F:neuropeptide hormone activity"/>
    <property type="evidence" value="ECO:0000315"/>
    <property type="project" value="UniProtKB"/>
</dbReference>
<dbReference type="GO" id="GO:0044539">
    <property type="term" value="P:long-chain fatty acid import into cell"/>
    <property type="evidence" value="ECO:0000250"/>
    <property type="project" value="UniProtKB"/>
</dbReference>
<dbReference type="GO" id="GO:0032099">
    <property type="term" value="P:negative regulation of appetite"/>
    <property type="evidence" value="ECO:0000250"/>
    <property type="project" value="UniProtKB"/>
</dbReference>
<dbReference type="GO" id="GO:0010459">
    <property type="term" value="P:negative regulation of heart rate"/>
    <property type="evidence" value="ECO:0000250"/>
    <property type="project" value="UniProtKB"/>
</dbReference>
<dbReference type="GO" id="GO:0035814">
    <property type="term" value="P:negative regulation of renal sodium excretion"/>
    <property type="evidence" value="ECO:0000250"/>
    <property type="project" value="UniProtKB"/>
</dbReference>
<dbReference type="GO" id="GO:1904306">
    <property type="term" value="P:positive regulation of gastro-intestinal system smooth muscle contraction"/>
    <property type="evidence" value="ECO:0000315"/>
    <property type="project" value="UniProtKB"/>
</dbReference>
<dbReference type="GO" id="GO:0003084">
    <property type="term" value="P:positive regulation of systemic arterial blood pressure"/>
    <property type="evidence" value="ECO:0000250"/>
    <property type="project" value="UniProtKB"/>
</dbReference>
<dbReference type="GO" id="GO:0051930">
    <property type="term" value="P:regulation of sensory perception of pain"/>
    <property type="evidence" value="ECO:0000250"/>
    <property type="project" value="UniProtKB"/>
</dbReference>
<dbReference type="InterPro" id="IPR028126">
    <property type="entry name" value="Spexin"/>
</dbReference>
<dbReference type="PANTHER" id="PTHR28590">
    <property type="entry name" value="SPEXIN"/>
    <property type="match status" value="1"/>
</dbReference>
<dbReference type="PANTHER" id="PTHR28590:SF1">
    <property type="entry name" value="SPEXIN"/>
    <property type="match status" value="1"/>
</dbReference>
<dbReference type="Pfam" id="PF15171">
    <property type="entry name" value="Spexin"/>
    <property type="match status" value="1"/>
</dbReference>
<feature type="signal peptide" evidence="2">
    <location>
        <begin position="1"/>
        <end position="26"/>
    </location>
</feature>
<feature type="chain" id="PRO_0000430213" description="Spexin">
    <location>
        <begin position="27"/>
        <end position="116"/>
    </location>
</feature>
<feature type="propeptide" id="PRO_0000363216">
    <location>
        <begin position="27"/>
        <end position="35"/>
    </location>
</feature>
<feature type="peptide" id="PRO_0000042159" description="Spexin-1">
    <location>
        <begin position="36"/>
        <end position="49"/>
    </location>
</feature>
<feature type="propeptide" id="PRO_0000363217">
    <location>
        <begin position="50"/>
        <end position="116"/>
    </location>
</feature>
<feature type="peptide" id="PRO_0000430214" description="Spexin-2">
    <location>
        <begin position="53"/>
        <end position="70"/>
    </location>
</feature>
<feature type="propeptide" id="PRO_0000430215">
    <location>
        <begin position="74"/>
        <end position="116"/>
    </location>
</feature>
<feature type="region of interest" description="Disordered" evidence="3">
    <location>
        <begin position="55"/>
        <end position="77"/>
    </location>
</feature>
<feature type="compositionally biased region" description="Basic and acidic residues" evidence="3">
    <location>
        <begin position="55"/>
        <end position="73"/>
    </location>
</feature>
<feature type="site" description="Cleavage; by prohormone convertase 2">
    <location>
        <begin position="35"/>
        <end position="36"/>
    </location>
</feature>
<feature type="site" description="Cleavage; by prohormone convertase 2">
    <location>
        <begin position="52"/>
        <end position="53"/>
    </location>
</feature>
<feature type="site" description="Cleavage; by prohormone convertase 2">
    <location>
        <begin position="72"/>
        <end position="73"/>
    </location>
</feature>
<feature type="modified residue" description="Glutamine amide" evidence="7">
    <location>
        <position position="49"/>
    </location>
</feature>
<feature type="helix" evidence="12">
    <location>
        <begin position="39"/>
        <end position="46"/>
    </location>
</feature>
<proteinExistence type="evidence at protein level"/>